<organism>
    <name type="scientific">Mus musculus</name>
    <name type="common">Mouse</name>
    <dbReference type="NCBI Taxonomy" id="10090"/>
    <lineage>
        <taxon>Eukaryota</taxon>
        <taxon>Metazoa</taxon>
        <taxon>Chordata</taxon>
        <taxon>Craniata</taxon>
        <taxon>Vertebrata</taxon>
        <taxon>Euteleostomi</taxon>
        <taxon>Mammalia</taxon>
        <taxon>Eutheria</taxon>
        <taxon>Euarchontoglires</taxon>
        <taxon>Glires</taxon>
        <taxon>Rodentia</taxon>
        <taxon>Myomorpha</taxon>
        <taxon>Muroidea</taxon>
        <taxon>Muridae</taxon>
        <taxon>Murinae</taxon>
        <taxon>Mus</taxon>
        <taxon>Mus</taxon>
    </lineage>
</organism>
<accession>Q80TS7</accession>
<accession>Q3TPT2</accession>
<accession>Q3TY46</accession>
<keyword id="KW-0002">3D-structure</keyword>
<keyword id="KW-1003">Cell membrane</keyword>
<keyword id="KW-0966">Cell projection</keyword>
<keyword id="KW-0175">Coiled coil</keyword>
<keyword id="KW-0963">Cytoplasm</keyword>
<keyword id="KW-0256">Endoplasmic reticulum</keyword>
<keyword id="KW-0472">Membrane</keyword>
<keyword id="KW-0539">Nucleus</keyword>
<keyword id="KW-0597">Phosphoprotein</keyword>
<keyword id="KW-0628">Postsynaptic cell membrane</keyword>
<keyword id="KW-1185">Reference proteome</keyword>
<keyword id="KW-0770">Synapse</keyword>
<reference key="1">
    <citation type="journal article" date="2005" name="Science">
        <title>The transcriptional landscape of the mammalian genome.</title>
        <authorList>
            <person name="Carninci P."/>
            <person name="Kasukawa T."/>
            <person name="Katayama S."/>
            <person name="Gough J."/>
            <person name="Frith M.C."/>
            <person name="Maeda N."/>
            <person name="Oyama R."/>
            <person name="Ravasi T."/>
            <person name="Lenhard B."/>
            <person name="Wells C."/>
            <person name="Kodzius R."/>
            <person name="Shimokawa K."/>
            <person name="Bajic V.B."/>
            <person name="Brenner S.E."/>
            <person name="Batalov S."/>
            <person name="Forrest A.R."/>
            <person name="Zavolan M."/>
            <person name="Davis M.J."/>
            <person name="Wilming L.G."/>
            <person name="Aidinis V."/>
            <person name="Allen J.E."/>
            <person name="Ambesi-Impiombato A."/>
            <person name="Apweiler R."/>
            <person name="Aturaliya R.N."/>
            <person name="Bailey T.L."/>
            <person name="Bansal M."/>
            <person name="Baxter L."/>
            <person name="Beisel K.W."/>
            <person name="Bersano T."/>
            <person name="Bono H."/>
            <person name="Chalk A.M."/>
            <person name="Chiu K.P."/>
            <person name="Choudhary V."/>
            <person name="Christoffels A."/>
            <person name="Clutterbuck D.R."/>
            <person name="Crowe M.L."/>
            <person name="Dalla E."/>
            <person name="Dalrymple B.P."/>
            <person name="de Bono B."/>
            <person name="Della Gatta G."/>
            <person name="di Bernardo D."/>
            <person name="Down T."/>
            <person name="Engstrom P."/>
            <person name="Fagiolini M."/>
            <person name="Faulkner G."/>
            <person name="Fletcher C.F."/>
            <person name="Fukushima T."/>
            <person name="Furuno M."/>
            <person name="Futaki S."/>
            <person name="Gariboldi M."/>
            <person name="Georgii-Hemming P."/>
            <person name="Gingeras T.R."/>
            <person name="Gojobori T."/>
            <person name="Green R.E."/>
            <person name="Gustincich S."/>
            <person name="Harbers M."/>
            <person name="Hayashi Y."/>
            <person name="Hensch T.K."/>
            <person name="Hirokawa N."/>
            <person name="Hill D."/>
            <person name="Huminiecki L."/>
            <person name="Iacono M."/>
            <person name="Ikeo K."/>
            <person name="Iwama A."/>
            <person name="Ishikawa T."/>
            <person name="Jakt M."/>
            <person name="Kanapin A."/>
            <person name="Katoh M."/>
            <person name="Kawasawa Y."/>
            <person name="Kelso J."/>
            <person name="Kitamura H."/>
            <person name="Kitano H."/>
            <person name="Kollias G."/>
            <person name="Krishnan S.P."/>
            <person name="Kruger A."/>
            <person name="Kummerfeld S.K."/>
            <person name="Kurochkin I.V."/>
            <person name="Lareau L.F."/>
            <person name="Lazarevic D."/>
            <person name="Lipovich L."/>
            <person name="Liu J."/>
            <person name="Liuni S."/>
            <person name="McWilliam S."/>
            <person name="Madan Babu M."/>
            <person name="Madera M."/>
            <person name="Marchionni L."/>
            <person name="Matsuda H."/>
            <person name="Matsuzawa S."/>
            <person name="Miki H."/>
            <person name="Mignone F."/>
            <person name="Miyake S."/>
            <person name="Morris K."/>
            <person name="Mottagui-Tabar S."/>
            <person name="Mulder N."/>
            <person name="Nakano N."/>
            <person name="Nakauchi H."/>
            <person name="Ng P."/>
            <person name="Nilsson R."/>
            <person name="Nishiguchi S."/>
            <person name="Nishikawa S."/>
            <person name="Nori F."/>
            <person name="Ohara O."/>
            <person name="Okazaki Y."/>
            <person name="Orlando V."/>
            <person name="Pang K.C."/>
            <person name="Pavan W.J."/>
            <person name="Pavesi G."/>
            <person name="Pesole G."/>
            <person name="Petrovsky N."/>
            <person name="Piazza S."/>
            <person name="Reed J."/>
            <person name="Reid J.F."/>
            <person name="Ring B.Z."/>
            <person name="Ringwald M."/>
            <person name="Rost B."/>
            <person name="Ruan Y."/>
            <person name="Salzberg S.L."/>
            <person name="Sandelin A."/>
            <person name="Schneider C."/>
            <person name="Schoenbach C."/>
            <person name="Sekiguchi K."/>
            <person name="Semple C.A."/>
            <person name="Seno S."/>
            <person name="Sessa L."/>
            <person name="Sheng Y."/>
            <person name="Shibata Y."/>
            <person name="Shimada H."/>
            <person name="Shimada K."/>
            <person name="Silva D."/>
            <person name="Sinclair B."/>
            <person name="Sperling S."/>
            <person name="Stupka E."/>
            <person name="Sugiura K."/>
            <person name="Sultana R."/>
            <person name="Takenaka Y."/>
            <person name="Taki K."/>
            <person name="Tammoja K."/>
            <person name="Tan S.L."/>
            <person name="Tang S."/>
            <person name="Taylor M.S."/>
            <person name="Tegner J."/>
            <person name="Teichmann S.A."/>
            <person name="Ueda H.R."/>
            <person name="van Nimwegen E."/>
            <person name="Verardo R."/>
            <person name="Wei C.L."/>
            <person name="Yagi K."/>
            <person name="Yamanishi H."/>
            <person name="Zabarovsky E."/>
            <person name="Zhu S."/>
            <person name="Zimmer A."/>
            <person name="Hide W."/>
            <person name="Bult C."/>
            <person name="Grimmond S.M."/>
            <person name="Teasdale R.D."/>
            <person name="Liu E.T."/>
            <person name="Brusic V."/>
            <person name="Quackenbush J."/>
            <person name="Wahlestedt C."/>
            <person name="Mattick J.S."/>
            <person name="Hume D.A."/>
            <person name="Kai C."/>
            <person name="Sasaki D."/>
            <person name="Tomaru Y."/>
            <person name="Fukuda S."/>
            <person name="Kanamori-Katayama M."/>
            <person name="Suzuki M."/>
            <person name="Aoki J."/>
            <person name="Arakawa T."/>
            <person name="Iida J."/>
            <person name="Imamura K."/>
            <person name="Itoh M."/>
            <person name="Kato T."/>
            <person name="Kawaji H."/>
            <person name="Kawagashira N."/>
            <person name="Kawashima T."/>
            <person name="Kojima M."/>
            <person name="Kondo S."/>
            <person name="Konno H."/>
            <person name="Nakano K."/>
            <person name="Ninomiya N."/>
            <person name="Nishio T."/>
            <person name="Okada M."/>
            <person name="Plessy C."/>
            <person name="Shibata K."/>
            <person name="Shiraki T."/>
            <person name="Suzuki S."/>
            <person name="Tagami M."/>
            <person name="Waki K."/>
            <person name="Watahiki A."/>
            <person name="Okamura-Oho Y."/>
            <person name="Suzuki H."/>
            <person name="Kawai J."/>
            <person name="Hayashizaki Y."/>
        </authorList>
    </citation>
    <scope>NUCLEOTIDE SEQUENCE [LARGE SCALE MRNA]</scope>
    <source>
        <strain>C57BL/6J</strain>
        <tissue>Hippocampus</tissue>
        <tissue>Visual cortex</tissue>
    </source>
</reference>
<reference key="2">
    <citation type="submission" date="2005-09" db="EMBL/GenBank/DDBJ databases">
        <authorList>
            <person name="Mural R.J."/>
            <person name="Adams M.D."/>
            <person name="Myers E.W."/>
            <person name="Smith H.O."/>
            <person name="Venter J.C."/>
        </authorList>
    </citation>
    <scope>NUCLEOTIDE SEQUENCE [LARGE SCALE GENOMIC DNA]</scope>
</reference>
<reference key="3">
    <citation type="journal article" date="2003" name="DNA Res.">
        <title>Prediction of the coding sequences of mouse homologues of KIAA gene: II. The complete nucleotide sequences of 400 mouse KIAA-homologous cDNAs identified by screening of terminal sequences of cDNA clones randomly sampled from size-fractionated libraries.</title>
        <authorList>
            <person name="Okazaki N."/>
            <person name="Kikuno R."/>
            <person name="Ohara R."/>
            <person name="Inamoto S."/>
            <person name="Aizawa H."/>
            <person name="Yuasa S."/>
            <person name="Nakajima D."/>
            <person name="Nagase T."/>
            <person name="Ohara O."/>
            <person name="Koga H."/>
        </authorList>
    </citation>
    <scope>NUCLEOTIDE SEQUENCE [LARGE SCALE MRNA] OF 6-710</scope>
    <source>
        <tissue>Brain</tissue>
    </source>
</reference>
<reference key="4">
    <citation type="journal article" date="2004" name="Genome Res.">
        <title>The status, quality, and expansion of the NIH full-length cDNA project: the Mammalian Gene Collection (MGC).</title>
        <authorList>
            <consortium name="The MGC Project Team"/>
        </authorList>
    </citation>
    <scope>NUCLEOTIDE SEQUENCE [LARGE SCALE MRNA] OF 49-710</scope>
    <source>
        <tissue>Brain</tissue>
    </source>
</reference>
<reference key="5">
    <citation type="journal article" date="2007" name="J. Am. Soc. Nephrol.">
        <title>Expression and subcellular distribution of novel glomerulus-associated proteins Dendrin, Ehd3, Sh2d4a, Plekhh2, and 2310066E14Rik.</title>
        <authorList>
            <person name="Patrakka J."/>
            <person name="Xiao Z."/>
            <person name="Nukui M."/>
            <person name="Takemoto M."/>
            <person name="He L."/>
            <person name="Oddsson A."/>
            <person name="Perisic L."/>
            <person name="Kaukinen A."/>
            <person name="Szigyarto C.A.-K."/>
            <person name="Uhlen M."/>
            <person name="Jalanko H."/>
            <person name="Betsholtz C."/>
            <person name="Tryggvason K."/>
        </authorList>
    </citation>
    <scope>SUBCELLULAR LOCATION</scope>
    <scope>TISSUE SPECIFICITY</scope>
</reference>
<reference key="6">
    <citation type="journal article" date="2007" name="Proc. Natl. Acad. Sci. U.S.A.">
        <title>Nuclear relocation of the nephrin and CD2AP-binding protein dendrin promotes apoptosis of podocytes.</title>
        <authorList>
            <person name="Asanuma K."/>
            <person name="Campbell K.N."/>
            <person name="Kim K."/>
            <person name="Faul C."/>
            <person name="Mundel P."/>
        </authorList>
    </citation>
    <scope>FUNCTION</scope>
    <scope>INTERACTION WITH CD2AP; NPHS1 AND NPHS2</scope>
    <scope>SUBCELLULAR LOCATION</scope>
    <scope>TISSUE SPECIFICITY</scope>
</reference>
<reference key="7">
    <citation type="journal article" date="2008" name="Nephrol. Dial. Transplant.">
        <title>Dendrin expression in glomerulogenesis and in human minimal change nephrotic syndrome.</title>
        <authorList>
            <person name="Duner F."/>
            <person name="Patrakka J."/>
            <person name="Xiao Z."/>
            <person name="Larsson J."/>
            <person name="Vlamis-Gardikas A."/>
            <person name="Pettersson E."/>
            <person name="Tryggvason K."/>
            <person name="Hultenby K."/>
            <person name="Wernerson A."/>
        </authorList>
    </citation>
    <scope>DEVELOPMENTAL STAGE</scope>
</reference>
<reference key="8">
    <citation type="journal article" date="2010" name="Cell">
        <title>A tissue-specific atlas of mouse protein phosphorylation and expression.</title>
        <authorList>
            <person name="Huttlin E.L."/>
            <person name="Jedrychowski M.P."/>
            <person name="Elias J.E."/>
            <person name="Goswami T."/>
            <person name="Rad R."/>
            <person name="Beausoleil S.A."/>
            <person name="Villen J."/>
            <person name="Haas W."/>
            <person name="Sowa M.E."/>
            <person name="Gygi S.P."/>
        </authorList>
    </citation>
    <scope>PHOSPHORYLATION [LARGE SCALE ANALYSIS] AT SER-388</scope>
    <scope>IDENTIFICATION BY MASS SPECTROMETRY [LARGE SCALE ANALYSIS]</scope>
    <source>
        <tissue>Brain</tissue>
    </source>
</reference>
<proteinExistence type="evidence at protein level"/>
<name>DEND_MOUSE</name>
<feature type="chain" id="PRO_0000079862" description="Dendrin">
    <location>
        <begin position="1"/>
        <end position="710"/>
    </location>
</feature>
<feature type="region of interest" description="Disordered" evidence="3">
    <location>
        <begin position="1"/>
        <end position="22"/>
    </location>
</feature>
<feature type="region of interest" description="Disordered" evidence="3">
    <location>
        <begin position="62"/>
        <end position="195"/>
    </location>
</feature>
<feature type="region of interest" description="Nuclear localization" evidence="1">
    <location>
        <begin position="113"/>
        <end position="131"/>
    </location>
</feature>
<feature type="region of interest" description="Interaction with MAGI2" evidence="1">
    <location>
        <begin position="186"/>
        <end position="236"/>
    </location>
</feature>
<feature type="region of interest" description="Disordered" evidence="3">
    <location>
        <begin position="213"/>
        <end position="274"/>
    </location>
</feature>
<feature type="region of interest" description="Disordered" evidence="3">
    <location>
        <begin position="324"/>
        <end position="375"/>
    </location>
</feature>
<feature type="region of interest" description="Interaction with ACTN1" evidence="1">
    <location>
        <begin position="341"/>
        <end position="435"/>
    </location>
</feature>
<feature type="region of interest" description="Disordered" evidence="3">
    <location>
        <begin position="390"/>
        <end position="422"/>
    </location>
</feature>
<feature type="region of interest" description="Interaction with CD2AP and NPHS1" evidence="1">
    <location>
        <begin position="407"/>
        <end position="708"/>
    </location>
</feature>
<feature type="region of interest" description="Disordered" evidence="3">
    <location>
        <begin position="469"/>
        <end position="508"/>
    </location>
</feature>
<feature type="region of interest" description="Disordered" evidence="3">
    <location>
        <begin position="521"/>
        <end position="710"/>
    </location>
</feature>
<feature type="coiled-coil region" evidence="2">
    <location>
        <begin position="103"/>
        <end position="134"/>
    </location>
</feature>
<feature type="compositionally biased region" description="Basic and acidic residues" evidence="3">
    <location>
        <begin position="105"/>
        <end position="127"/>
    </location>
</feature>
<feature type="compositionally biased region" description="Basic and acidic residues" evidence="3">
    <location>
        <begin position="265"/>
        <end position="274"/>
    </location>
</feature>
<feature type="compositionally biased region" description="Basic residues" evidence="3">
    <location>
        <begin position="360"/>
        <end position="370"/>
    </location>
</feature>
<feature type="compositionally biased region" description="Polar residues" evidence="3">
    <location>
        <begin position="469"/>
        <end position="491"/>
    </location>
</feature>
<feature type="compositionally biased region" description="Basic and acidic residues" evidence="3">
    <location>
        <begin position="693"/>
        <end position="710"/>
    </location>
</feature>
<feature type="modified residue" description="Phosphoserine" evidence="8">
    <location>
        <position position="388"/>
    </location>
</feature>
<feature type="sequence conflict" description="In Ref. 1; BAE37653." evidence="7" ref="1">
    <original>S</original>
    <variation>I</variation>
    <location>
        <position position="679"/>
    </location>
</feature>
<feature type="strand" evidence="9">
    <location>
        <begin position="233"/>
        <end position="235"/>
    </location>
</feature>
<feature type="strand" evidence="9">
    <location>
        <begin position="239"/>
        <end position="241"/>
    </location>
</feature>
<gene>
    <name type="primary">Ddn</name>
    <name type="synonym">Gm748</name>
    <name type="synonym">Kiaa0749</name>
</gene>
<evidence type="ECO:0000250" key="1"/>
<evidence type="ECO:0000255" key="2"/>
<evidence type="ECO:0000256" key="3">
    <source>
        <dbReference type="SAM" id="MobiDB-lite"/>
    </source>
</evidence>
<evidence type="ECO:0000269" key="4">
    <source>
    </source>
</evidence>
<evidence type="ECO:0000269" key="5">
    <source>
    </source>
</evidence>
<evidence type="ECO:0000269" key="6">
    <source>
    </source>
</evidence>
<evidence type="ECO:0000305" key="7"/>
<evidence type="ECO:0007744" key="8">
    <source>
    </source>
</evidence>
<evidence type="ECO:0007829" key="9">
    <source>
        <dbReference type="PDB" id="6JK1"/>
    </source>
</evidence>
<protein>
    <recommendedName>
        <fullName>Dendrin</fullName>
    </recommendedName>
</protein>
<sequence length="710" mass="76407">MLDGPLFSEGPDSPRELQDEESGSCLWVQKSKLLVIEVKTISCHYSRRAPSRQSMDIQASYWARGPQSRTCRLRPGSPEPPPRRPWASRVLQEATNWRAGPPAEVRAREQEKRKAASQEREAKETERKRRKAGGARRSPLGQPRPEPRNALRAAQPTGFPVFSRPERFGQVGRAPRPSVLPQGDPGVAWAGPWGGRRPGPPSYEAHLLLRGSAGTAPRRRWDRPPPYVAPPSYEGPHRTLGTKRGPELSRAPTSSAPVPATTRTEGGRTKKRLDPRIYRDVLGAWGLRQGRGLLGGAPGCTAARARPESCKGAIEKSSGLVAAGLNSAGDSHSQGKTTGGPGTDAALSRSAISSPPRPVPRSRQHLRGSRKGKEGSEQIWLPTCWLASPKKPPVRHSQTLPRPWAPGGTGWKESLGQREGAEHETLEVWKVTRRAHTLPRISRGPAGREGIFVIDATCVVIKSQYVPTPRTQQGQLVPSGESCSVSDSLSQPKPCHEEEGEGAAANPSVCQKRLLSSRVLNQPSEGRECEAEVGQQGDSSLEERSSSGLGFPVGEVNPRDAPTQPGSQEHPTLGPAAPVCAGSLKGSEAAGVPRRAGGGWARTPGPYAGALREAVSRIRRHTAPDSDSDEAEDLSVHSGSSDGSDTDAPGASWRNERTLPALGNTRPREGGKTAGLSDSIREIVDVISQTEEGFIREDTRKTPQGNRERE</sequence>
<dbReference type="EMBL" id="AK158894">
    <property type="protein sequence ID" value="BAE34717.1"/>
    <property type="status" value="ALT_INIT"/>
    <property type="molecule type" value="mRNA"/>
</dbReference>
<dbReference type="EMBL" id="AK164154">
    <property type="protein sequence ID" value="BAE37653.1"/>
    <property type="molecule type" value="mRNA"/>
</dbReference>
<dbReference type="EMBL" id="CH466550">
    <property type="protein sequence ID" value="EDL04165.1"/>
    <property type="status" value="ALT_INIT"/>
    <property type="molecule type" value="Genomic_DNA"/>
</dbReference>
<dbReference type="EMBL" id="AK122363">
    <property type="protein sequence ID" value="BAC65645.1"/>
    <property type="molecule type" value="mRNA"/>
</dbReference>
<dbReference type="EMBL" id="BC157995">
    <property type="protein sequence ID" value="AAI57996.1"/>
    <property type="status" value="ALT_INIT"/>
    <property type="molecule type" value="mRNA"/>
</dbReference>
<dbReference type="EMBL" id="BC157996">
    <property type="protein sequence ID" value="AAI57997.1"/>
    <property type="status" value="ALT_INIT"/>
    <property type="molecule type" value="mRNA"/>
</dbReference>
<dbReference type="CCDS" id="CCDS49723.1"/>
<dbReference type="RefSeq" id="NP_001013763.1">
    <property type="nucleotide sequence ID" value="NM_001013741.1"/>
</dbReference>
<dbReference type="PDB" id="6J69">
    <property type="method" value="X-ray"/>
    <property type="resolution" value="2.75 A"/>
    <property type="chains" value="B=222-246"/>
</dbReference>
<dbReference type="PDB" id="6JJZ">
    <property type="method" value="X-ray"/>
    <property type="resolution" value="1.65 A"/>
    <property type="chains" value="C/D=222-235"/>
</dbReference>
<dbReference type="PDB" id="6JK0">
    <property type="method" value="X-ray"/>
    <property type="resolution" value="3.10 A"/>
    <property type="chains" value="A=222-241"/>
</dbReference>
<dbReference type="PDB" id="6JK1">
    <property type="method" value="X-ray"/>
    <property type="resolution" value="2.00 A"/>
    <property type="chains" value="A/B=222-241"/>
</dbReference>
<dbReference type="PDB" id="6KKG">
    <property type="method" value="X-ray"/>
    <property type="resolution" value="2.15 A"/>
    <property type="chains" value="C/D=222-241"/>
</dbReference>
<dbReference type="PDB" id="7BQG">
    <property type="method" value="X-ray"/>
    <property type="resolution" value="1.55 A"/>
    <property type="chains" value="A=225-235"/>
</dbReference>
<dbReference type="PDBsum" id="6J69"/>
<dbReference type="PDBsum" id="6JJZ"/>
<dbReference type="PDBsum" id="6JK0"/>
<dbReference type="PDBsum" id="6JK1"/>
<dbReference type="PDBsum" id="6KKG"/>
<dbReference type="PDBsum" id="7BQG"/>
<dbReference type="SMR" id="Q80TS7"/>
<dbReference type="BioGRID" id="199079">
    <property type="interactions" value="2"/>
</dbReference>
<dbReference type="FunCoup" id="Q80TS7">
    <property type="interactions" value="198"/>
</dbReference>
<dbReference type="IntAct" id="Q80TS7">
    <property type="interactions" value="2"/>
</dbReference>
<dbReference type="STRING" id="10090.ENSMUSP00000074895"/>
<dbReference type="iPTMnet" id="Q80TS7"/>
<dbReference type="PhosphoSitePlus" id="Q80TS7"/>
<dbReference type="PaxDb" id="10090-ENSMUSP00000074895"/>
<dbReference type="ProteomicsDB" id="279373"/>
<dbReference type="Antibodypedia" id="74886">
    <property type="antibodies" value="12 antibodies from 5 providers"/>
</dbReference>
<dbReference type="Ensembl" id="ENSMUST00000075444.8">
    <property type="protein sequence ID" value="ENSMUSP00000074895.7"/>
    <property type="gene ID" value="ENSMUSG00000059213.8"/>
</dbReference>
<dbReference type="GeneID" id="13199"/>
<dbReference type="KEGG" id="mmu:13199"/>
<dbReference type="UCSC" id="uc007xny.1">
    <property type="organism name" value="mouse"/>
</dbReference>
<dbReference type="AGR" id="MGI:108101"/>
<dbReference type="CTD" id="23109"/>
<dbReference type="MGI" id="MGI:108101">
    <property type="gene designation" value="Ddn"/>
</dbReference>
<dbReference type="VEuPathDB" id="HostDB:ENSMUSG00000059213"/>
<dbReference type="eggNOG" id="ENOG502SA8Z">
    <property type="taxonomic scope" value="Eukaryota"/>
</dbReference>
<dbReference type="GeneTree" id="ENSGT00390000016495"/>
<dbReference type="HOGENOM" id="CLU_422079_0_0_1"/>
<dbReference type="InParanoid" id="Q80TS7"/>
<dbReference type="OMA" id="TPQGNRE"/>
<dbReference type="OrthoDB" id="9900378at2759"/>
<dbReference type="PhylomeDB" id="Q80TS7"/>
<dbReference type="TreeFam" id="TF337173"/>
<dbReference type="BioGRID-ORCS" id="13199">
    <property type="hits" value="1 hit in 79 CRISPR screens"/>
</dbReference>
<dbReference type="CD-CODE" id="CE726F99">
    <property type="entry name" value="Postsynaptic density"/>
</dbReference>
<dbReference type="PRO" id="PR:Q80TS7"/>
<dbReference type="Proteomes" id="UP000000589">
    <property type="component" value="Chromosome 15"/>
</dbReference>
<dbReference type="RNAct" id="Q80TS7">
    <property type="molecule type" value="protein"/>
</dbReference>
<dbReference type="Bgee" id="ENSMUSG00000059213">
    <property type="expression patterns" value="Expressed in CA1 field of hippocampus and 87 other cell types or tissues"/>
</dbReference>
<dbReference type="ExpressionAtlas" id="Q80TS7">
    <property type="expression patterns" value="baseline and differential"/>
</dbReference>
<dbReference type="GO" id="GO:0030425">
    <property type="term" value="C:dendrite"/>
    <property type="evidence" value="ECO:0000266"/>
    <property type="project" value="MGI"/>
</dbReference>
<dbReference type="GO" id="GO:0032591">
    <property type="term" value="C:dendritic spine membrane"/>
    <property type="evidence" value="ECO:0007669"/>
    <property type="project" value="UniProtKB-SubCell"/>
</dbReference>
<dbReference type="GO" id="GO:0005789">
    <property type="term" value="C:endoplasmic reticulum membrane"/>
    <property type="evidence" value="ECO:0007669"/>
    <property type="project" value="UniProtKB-SubCell"/>
</dbReference>
<dbReference type="GO" id="GO:0005634">
    <property type="term" value="C:nucleus"/>
    <property type="evidence" value="ECO:0000314"/>
    <property type="project" value="MGI"/>
</dbReference>
<dbReference type="GO" id="GO:0043204">
    <property type="term" value="C:perikaryon"/>
    <property type="evidence" value="ECO:0007669"/>
    <property type="project" value="UniProtKB-SubCell"/>
</dbReference>
<dbReference type="GO" id="GO:0005886">
    <property type="term" value="C:plasma membrane"/>
    <property type="evidence" value="ECO:0000314"/>
    <property type="project" value="MGI"/>
</dbReference>
<dbReference type="GO" id="GO:0045211">
    <property type="term" value="C:postsynaptic membrane"/>
    <property type="evidence" value="ECO:0007669"/>
    <property type="project" value="UniProtKB-KW"/>
</dbReference>
<dbReference type="GO" id="GO:0098793">
    <property type="term" value="C:presynapse"/>
    <property type="evidence" value="ECO:0007669"/>
    <property type="project" value="Ensembl"/>
</dbReference>
<dbReference type="GO" id="GO:0000981">
    <property type="term" value="F:DNA-binding transcription factor activity, RNA polymerase II-specific"/>
    <property type="evidence" value="ECO:0000266"/>
    <property type="project" value="MGI"/>
</dbReference>
<dbReference type="GO" id="GO:0000978">
    <property type="term" value="F:RNA polymerase II cis-regulatory region sequence-specific DNA binding"/>
    <property type="evidence" value="ECO:0000266"/>
    <property type="project" value="MGI"/>
</dbReference>
<dbReference type="GO" id="GO:0045944">
    <property type="term" value="P:positive regulation of transcription by RNA polymerase II"/>
    <property type="evidence" value="ECO:0000266"/>
    <property type="project" value="MGI"/>
</dbReference>
<dbReference type="InterPro" id="IPR026500">
    <property type="entry name" value="Dendrin"/>
</dbReference>
<dbReference type="PANTHER" id="PTHR16757">
    <property type="entry name" value="DENDRIN"/>
    <property type="match status" value="1"/>
</dbReference>
<dbReference type="PANTHER" id="PTHR16757:SF1">
    <property type="entry name" value="DENDRIN"/>
    <property type="match status" value="1"/>
</dbReference>
<dbReference type="Pfam" id="PF15498">
    <property type="entry name" value="Dendrin"/>
    <property type="match status" value="1"/>
</dbReference>
<comment type="function">
    <text evidence="5">Promotes apoptosis of kidney glomerular podocytes. Podocytes are highly specialized cells essential to the ultrafiltration of blood, resulting in the extraction of urine and the retention of protein.</text>
</comment>
<comment type="subunit">
    <text evidence="1 5">Forms a ternary complex with MAGI2 and SH3KBP1; recruits DDN to the cytoplasm (By similarity). Interacts with MAGI1 (By similarity). Interacts with ACTN1 and may interact with WWC1 (By similarity). Interacts with the podocyte slit diaphragm proteins CD2AP, NPHS1 and NPHS2; the interaction with CD2AP and NPHS1 is direct.</text>
</comment>
<comment type="subcellular location">
    <subcellularLocation>
        <location evidence="1">Cell projection</location>
        <location evidence="1">Dendritic spine membrane</location>
        <topology evidence="1">Peripheral membrane protein</topology>
    </subcellularLocation>
    <subcellularLocation>
        <location>Cytoplasm</location>
    </subcellularLocation>
    <subcellularLocation>
        <location evidence="1">Endoplasmic reticulum membrane</location>
        <topology evidence="1">Peripheral membrane protein</topology>
        <orientation evidence="1">Cytoplasmic side</orientation>
    </subcellularLocation>
    <subcellularLocation>
        <location evidence="1">Perikaryon</location>
    </subcellularLocation>
    <subcellularLocation>
        <location>Nucleus</location>
    </subcellularLocation>
    <text evidence="1">Enriched at the cytoplasmic insertion of the slit diaphragm into the foot process of podocytes and associated with polyribosomes in dendrites.</text>
</comment>
<comment type="tissue specificity">
    <text evidence="4 5">Two forms of 81 kDa and 89 kDa are expressed in brain. The 81 kDa form is the only one found in kidney podocytes.</text>
</comment>
<comment type="developmental stage">
    <text evidence="6">Expressed in the developing podocytes during glomerulogenesis.</text>
</comment>
<comment type="miscellaneous">
    <text>The 81 and 89 kDa forms are detected by an antibody raised against a C-terminal peptide arguing for alternative N-terminal sequences.</text>
</comment>
<comment type="sequence caution" evidence="7">
    <conflict type="erroneous initiation">
        <sequence resource="EMBL-CDS" id="AAI57996"/>
    </conflict>
</comment>
<comment type="sequence caution" evidence="7">
    <conflict type="erroneous initiation">
        <sequence resource="EMBL-CDS" id="AAI57997"/>
    </conflict>
</comment>
<comment type="sequence caution" evidence="7">
    <conflict type="erroneous initiation">
        <sequence resource="EMBL-CDS" id="BAE34717"/>
    </conflict>
</comment>
<comment type="sequence caution" evidence="7">
    <conflict type="erroneous initiation">
        <sequence resource="EMBL-CDS" id="EDL04165"/>
    </conflict>
</comment>